<accession>P52879</accession>
<keyword id="KW-0472">Membrane</keyword>
<keyword id="KW-0653">Protein transport</keyword>
<keyword id="KW-1185">Reference proteome</keyword>
<keyword id="KW-0812">Transmembrane</keyword>
<keyword id="KW-1133">Transmembrane helix</keyword>
<keyword id="KW-0813">Transport</keyword>
<protein>
    <recommendedName>
        <fullName>Protein RER1 homolog</fullName>
    </recommendedName>
</protein>
<proteinExistence type="inferred from homology"/>
<evidence type="ECO:0000250" key="1"/>
<evidence type="ECO:0000255" key="2"/>
<evidence type="ECO:0000305" key="3"/>
<name>RER1_CAEEL</name>
<reference key="1">
    <citation type="journal article" date="1998" name="Science">
        <title>Genome sequence of the nematode C. elegans: a platform for investigating biology.</title>
        <authorList>
            <consortium name="The C. elegans sequencing consortium"/>
        </authorList>
    </citation>
    <scope>NUCLEOTIDE SEQUENCE [LARGE SCALE GENOMIC DNA]</scope>
    <source>
        <strain>Bristol N2</strain>
    </source>
</reference>
<organism>
    <name type="scientific">Caenorhabditis elegans</name>
    <dbReference type="NCBI Taxonomy" id="6239"/>
    <lineage>
        <taxon>Eukaryota</taxon>
        <taxon>Metazoa</taxon>
        <taxon>Ecdysozoa</taxon>
        <taxon>Nematoda</taxon>
        <taxon>Chromadorea</taxon>
        <taxon>Rhabditida</taxon>
        <taxon>Rhabditina</taxon>
        <taxon>Rhabditomorpha</taxon>
        <taxon>Rhabditoidea</taxon>
        <taxon>Rhabditidae</taxon>
        <taxon>Peloderinae</taxon>
        <taxon>Caenorhabditis</taxon>
    </lineage>
</organism>
<comment type="function">
    <text evidence="1">May be involved in protein transport along the secretory pathway.</text>
</comment>
<comment type="subcellular location">
    <subcellularLocation>
        <location evidence="3">Membrane</location>
        <topology evidence="3">Multi-pass membrane protein</topology>
    </subcellularLocation>
</comment>
<comment type="similarity">
    <text evidence="3">Belongs to the RER1 family.</text>
</comment>
<gene>
    <name type="primary">rer-1</name>
    <name type="ORF">F46C5.8</name>
</gene>
<feature type="chain" id="PRO_0000207597" description="Protein RER1 homolog">
    <location>
        <begin position="1"/>
        <end position="191"/>
    </location>
</feature>
<feature type="transmembrane region" description="Helical" evidence="2">
    <location>
        <begin position="35"/>
        <end position="55"/>
    </location>
</feature>
<feature type="transmembrane region" description="Helical" evidence="2">
    <location>
        <begin position="57"/>
        <end position="77"/>
    </location>
</feature>
<feature type="transmembrane region" description="Helical" evidence="2">
    <location>
        <begin position="135"/>
        <end position="155"/>
    </location>
</feature>
<sequence length="191" mass="22593">MDDGLRDRPGVTSRFFHSLEVKYQYYLDRLTPHTAFRWVIALISLVFFASRIILLQGFYIVAYAVGIYYLNLFLLFLTPSIDPALEFEDEDDGPVLPSKTNDEFRPFMRRLPEFKFWHSFMKATLIAITCTFFEFFDVPVFWPILVMYFFILTFLTLKRQIMHMIKYRYIPFTVGKPRMAGKEDTGKVVVG</sequence>
<dbReference type="EMBL" id="Z54281">
    <property type="protein sequence ID" value="CAA91047.1"/>
    <property type="molecule type" value="Genomic_DNA"/>
</dbReference>
<dbReference type="PIR" id="T22302">
    <property type="entry name" value="T22302"/>
</dbReference>
<dbReference type="RefSeq" id="NP_001366730.1">
    <property type="nucleotide sequence ID" value="NM_001381540.2"/>
</dbReference>
<dbReference type="RefSeq" id="NP_495878.1">
    <property type="nucleotide sequence ID" value="NM_063477.6"/>
</dbReference>
<dbReference type="BioGRID" id="39737">
    <property type="interactions" value="2"/>
</dbReference>
<dbReference type="FunCoup" id="P52879">
    <property type="interactions" value="3300"/>
</dbReference>
<dbReference type="STRING" id="6239.F46C5.8.1"/>
<dbReference type="PaxDb" id="6239-F46C5.8.2"/>
<dbReference type="EnsemblMetazoa" id="F46C5.8.1">
    <property type="protein sequence ID" value="F46C5.8.1"/>
    <property type="gene ID" value="WBGene00009783"/>
</dbReference>
<dbReference type="GeneID" id="174410"/>
<dbReference type="UCSC" id="F46C5.8.1">
    <property type="organism name" value="c. elegans"/>
</dbReference>
<dbReference type="AGR" id="WB:WBGene00009783"/>
<dbReference type="WormBase" id="F46C5.8">
    <property type="protein sequence ID" value="CE03349"/>
    <property type="gene ID" value="WBGene00009783"/>
    <property type="gene designation" value="rer-1"/>
</dbReference>
<dbReference type="eggNOG" id="KOG1688">
    <property type="taxonomic scope" value="Eukaryota"/>
</dbReference>
<dbReference type="GeneTree" id="ENSGT00510000047137"/>
<dbReference type="HOGENOM" id="CLU_074889_1_0_1"/>
<dbReference type="InParanoid" id="P52879"/>
<dbReference type="OMA" id="GWYVVCY"/>
<dbReference type="OrthoDB" id="448250at2759"/>
<dbReference type="PhylomeDB" id="P52879"/>
<dbReference type="PRO" id="PR:P52879"/>
<dbReference type="Proteomes" id="UP000001940">
    <property type="component" value="Chromosome II"/>
</dbReference>
<dbReference type="Bgee" id="WBGene00009783">
    <property type="expression patterns" value="Expressed in pharyngeal muscle cell (C elegans) and 4 other cell types or tissues"/>
</dbReference>
<dbReference type="GO" id="GO:0005783">
    <property type="term" value="C:endoplasmic reticulum"/>
    <property type="evidence" value="ECO:0007669"/>
    <property type="project" value="GOC"/>
</dbReference>
<dbReference type="GO" id="GO:0000139">
    <property type="term" value="C:Golgi membrane"/>
    <property type="evidence" value="ECO:0000318"/>
    <property type="project" value="GO_Central"/>
</dbReference>
<dbReference type="GO" id="GO:0036498">
    <property type="term" value="P:IRE1-mediated unfolded protein response"/>
    <property type="evidence" value="ECO:0007007"/>
    <property type="project" value="WormBase"/>
</dbReference>
<dbReference type="GO" id="GO:0006621">
    <property type="term" value="P:protein retention in ER lumen"/>
    <property type="evidence" value="ECO:0000318"/>
    <property type="project" value="GO_Central"/>
</dbReference>
<dbReference type="GO" id="GO:0015031">
    <property type="term" value="P:protein transport"/>
    <property type="evidence" value="ECO:0007669"/>
    <property type="project" value="UniProtKB-KW"/>
</dbReference>
<dbReference type="GO" id="GO:0006890">
    <property type="term" value="P:retrograde vesicle-mediated transport, Golgi to endoplasmic reticulum"/>
    <property type="evidence" value="ECO:0000318"/>
    <property type="project" value="GO_Central"/>
</dbReference>
<dbReference type="InterPro" id="IPR004932">
    <property type="entry name" value="Rer1"/>
</dbReference>
<dbReference type="PANTHER" id="PTHR10743">
    <property type="entry name" value="PROTEIN RER1"/>
    <property type="match status" value="1"/>
</dbReference>
<dbReference type="PANTHER" id="PTHR10743:SF0">
    <property type="entry name" value="PROTEIN RER1"/>
    <property type="match status" value="1"/>
</dbReference>
<dbReference type="Pfam" id="PF03248">
    <property type="entry name" value="Rer1"/>
    <property type="match status" value="1"/>
</dbReference>
<dbReference type="PIRSF" id="PIRSF016013">
    <property type="entry name" value="AtER_Rer1p"/>
    <property type="match status" value="1"/>
</dbReference>